<keyword id="KW-0238">DNA-binding</keyword>
<keyword id="KW-0371">Homeobox</keyword>
<keyword id="KW-0539">Nucleus</keyword>
<keyword id="KW-1185">Reference proteome</keyword>
<protein>
    <recommendedName>
        <fullName>Homeobox protein knotted-1-like 10</fullName>
    </recommendedName>
    <alternativeName>
        <fullName>Homeobox protein HOS9</fullName>
    </alternativeName>
    <alternativeName>
        <fullName>Homeobox protein OSH71</fullName>
    </alternativeName>
    <alternativeName>
        <fullName>Homeobox protein knotted-1-like 2</fullName>
        <shortName>Oskn2</shortName>
    </alternativeName>
</protein>
<accession>Q7GDL5</accession>
<accession>B7F4B0</accession>
<accession>O65033</accession>
<proteinExistence type="evidence at transcript level"/>
<reference key="1">
    <citation type="journal article" date="1999" name="Biochim. Biophys. Acta">
        <title>Expression of novel homeobox genes in early embryogenesis in rice.</title>
        <authorList>
            <person name="Ito Y."/>
            <person name="Eiguchi M."/>
            <person name="Kurata N."/>
        </authorList>
    </citation>
    <scope>NUCLEOTIDE SEQUENCE [MRNA]</scope>
    <scope>DEVELOPMENTAL STAGE</scope>
    <source>
        <strain>cv. Nipponbare</strain>
        <tissue>Embryo</tissue>
    </source>
</reference>
<reference key="2">
    <citation type="journal article" date="1999" name="Plant Cell">
        <title>Regional expression of the rice KN1-type homeobox gene family during embryo, shoot, and flower development.</title>
        <authorList>
            <person name="Sentoku N."/>
            <person name="Sato Y."/>
            <person name="Kurata N."/>
            <person name="Ito Y."/>
            <person name="Kitano H."/>
            <person name="Matsuoka M."/>
        </authorList>
    </citation>
    <scope>NUCLEOTIDE SEQUENCE [MRNA]</scope>
    <scope>FUNCTION</scope>
    <scope>DEVELOPMENTAL STAGE</scope>
    <source>
        <strain>cv. Nipponbare</strain>
        <tissue>Embryo</tissue>
    </source>
</reference>
<reference key="3">
    <citation type="journal article" date="2005" name="Mol. Genet. Genomics">
        <title>A fine physical map of the rice chromosome 5.</title>
        <authorList>
            <person name="Cheng C.-H."/>
            <person name="Chung M.C."/>
            <person name="Liu S.-M."/>
            <person name="Chen S.-K."/>
            <person name="Kao F.Y."/>
            <person name="Lin S.-J."/>
            <person name="Hsiao S.-H."/>
            <person name="Tseng I.C."/>
            <person name="Hsing Y.-I.C."/>
            <person name="Wu H.-P."/>
            <person name="Chen C.-S."/>
            <person name="Shaw J.-F."/>
            <person name="Wu J."/>
            <person name="Matsumoto T."/>
            <person name="Sasaki T."/>
            <person name="Chen H.-C."/>
            <person name="Chow T.-Y."/>
        </authorList>
    </citation>
    <scope>NUCLEOTIDE SEQUENCE [LARGE SCALE GENOMIC DNA]</scope>
    <source>
        <strain>cv. Nipponbare</strain>
    </source>
</reference>
<reference key="4">
    <citation type="journal article" date="2005" name="Nature">
        <title>The map-based sequence of the rice genome.</title>
        <authorList>
            <consortium name="International rice genome sequencing project (IRGSP)"/>
        </authorList>
    </citation>
    <scope>NUCLEOTIDE SEQUENCE [LARGE SCALE GENOMIC DNA]</scope>
    <source>
        <strain>cv. Nipponbare</strain>
    </source>
</reference>
<reference key="5">
    <citation type="journal article" date="2008" name="Nucleic Acids Res.">
        <title>The rice annotation project database (RAP-DB): 2008 update.</title>
        <authorList>
            <consortium name="The rice annotation project (RAP)"/>
        </authorList>
    </citation>
    <scope>GENOME REANNOTATION</scope>
    <source>
        <strain>cv. Nipponbare</strain>
    </source>
</reference>
<reference key="6">
    <citation type="journal article" date="2013" name="Rice">
        <title>Improvement of the Oryza sativa Nipponbare reference genome using next generation sequence and optical map data.</title>
        <authorList>
            <person name="Kawahara Y."/>
            <person name="de la Bastide M."/>
            <person name="Hamilton J.P."/>
            <person name="Kanamori H."/>
            <person name="McCombie W.R."/>
            <person name="Ouyang S."/>
            <person name="Schwartz D.C."/>
            <person name="Tanaka T."/>
            <person name="Wu J."/>
            <person name="Zhou S."/>
            <person name="Childs K.L."/>
            <person name="Davidson R.M."/>
            <person name="Lin H."/>
            <person name="Quesada-Ocampo L."/>
            <person name="Vaillancourt B."/>
            <person name="Sakai H."/>
            <person name="Lee S.S."/>
            <person name="Kim J."/>
            <person name="Numa H."/>
            <person name="Itoh T."/>
            <person name="Buell C.R."/>
            <person name="Matsumoto T."/>
        </authorList>
    </citation>
    <scope>GENOME REANNOTATION</scope>
    <source>
        <strain>cv. Nipponbare</strain>
    </source>
</reference>
<reference key="7">
    <citation type="journal article" date="2003" name="Science">
        <title>Collection, mapping, and annotation of over 28,000 cDNA clones from japonica rice.</title>
        <authorList>
            <consortium name="The rice full-length cDNA consortium"/>
        </authorList>
    </citation>
    <scope>NUCLEOTIDE SEQUENCE [LARGE SCALE MRNA]</scope>
    <source>
        <strain>cv. Nipponbare</strain>
    </source>
</reference>
<reference key="8">
    <citation type="journal article" date="1999" name="Plant Mol. Biol.">
        <title>Characterization of the KNOX class homeobox genes Oskn2 and Oskn3 identified in a collection of cDNA libraries covering the early stages of rice embryogenesis.</title>
        <authorList>
            <person name="Postma-Haarsma A.D."/>
            <person name="Verwoert I.I.G."/>
            <person name="Stronk O.P."/>
            <person name="Koster J."/>
            <person name="Lamers G.E.M."/>
            <person name="Hoge J.H."/>
            <person name="Meijer A.H."/>
        </authorList>
    </citation>
    <scope>FUNCTION</scope>
    <scope>DEVELOPMENTAL STAGE</scope>
</reference>
<reference key="9">
    <citation type="journal article" date="2008" name="FEBS J.">
        <title>Genome-wide identification, classification, evolutionary expansion and expression analyses of homeobox genes in rice.</title>
        <authorList>
            <person name="Jain M."/>
            <person name="Tyagi A.K."/>
            <person name="Khurana J.P."/>
        </authorList>
    </citation>
    <scope>GENE FAMILY</scope>
    <scope>NOMENCLATURE</scope>
</reference>
<organism>
    <name type="scientific">Oryza sativa subsp. japonica</name>
    <name type="common">Rice</name>
    <dbReference type="NCBI Taxonomy" id="39947"/>
    <lineage>
        <taxon>Eukaryota</taxon>
        <taxon>Viridiplantae</taxon>
        <taxon>Streptophyta</taxon>
        <taxon>Embryophyta</taxon>
        <taxon>Tracheophyta</taxon>
        <taxon>Spermatophyta</taxon>
        <taxon>Magnoliopsida</taxon>
        <taxon>Liliopsida</taxon>
        <taxon>Poales</taxon>
        <taxon>Poaceae</taxon>
        <taxon>BOP clade</taxon>
        <taxon>Oryzoideae</taxon>
        <taxon>Oryzeae</taxon>
        <taxon>Oryzinae</taxon>
        <taxon>Oryza</taxon>
        <taxon>Oryza sativa</taxon>
    </lineage>
</organism>
<name>KNOSA_ORYSJ</name>
<feature type="chain" id="PRO_0000360012" description="Homeobox protein knotted-1-like 10">
    <location>
        <begin position="1"/>
        <end position="311"/>
    </location>
</feature>
<feature type="domain" description="ELK" evidence="2">
    <location>
        <begin position="197"/>
        <end position="217"/>
    </location>
</feature>
<feature type="DNA-binding region" description="Homeobox; TALE-type" evidence="1">
    <location>
        <begin position="218"/>
        <end position="281"/>
    </location>
</feature>
<feature type="region of interest" description="Disordered" evidence="3">
    <location>
        <begin position="1"/>
        <end position="45"/>
    </location>
</feature>
<feature type="region of interest" description="Disordered" evidence="3">
    <location>
        <begin position="153"/>
        <end position="184"/>
    </location>
</feature>
<feature type="compositionally biased region" description="Gly residues" evidence="3">
    <location>
        <begin position="12"/>
        <end position="22"/>
    </location>
</feature>
<dbReference type="EMBL" id="AB007624">
    <property type="protein sequence ID" value="BAA77818.1"/>
    <property type="molecule type" value="mRNA"/>
</dbReference>
<dbReference type="EMBL" id="AB028885">
    <property type="protein sequence ID" value="BAA79226.1"/>
    <property type="molecule type" value="mRNA"/>
</dbReference>
<dbReference type="EMBL" id="AC130598">
    <property type="protein sequence ID" value="AAU10751.1"/>
    <property type="molecule type" value="Genomic_DNA"/>
</dbReference>
<dbReference type="EMBL" id="AP008211">
    <property type="protein sequence ID" value="BAF16460.1"/>
    <property type="molecule type" value="Genomic_DNA"/>
</dbReference>
<dbReference type="EMBL" id="AP014961">
    <property type="protein sequence ID" value="BAS92104.1"/>
    <property type="molecule type" value="Genomic_DNA"/>
</dbReference>
<dbReference type="EMBL" id="AK111878">
    <property type="protein sequence ID" value="BAG99457.1"/>
    <property type="molecule type" value="mRNA"/>
</dbReference>
<dbReference type="RefSeq" id="XP_015637898.1">
    <property type="nucleotide sequence ID" value="XM_015782412.1"/>
</dbReference>
<dbReference type="SMR" id="Q7GDL5"/>
<dbReference type="FunCoup" id="Q7GDL5">
    <property type="interactions" value="331"/>
</dbReference>
<dbReference type="STRING" id="39947.Q7GDL5"/>
<dbReference type="PaxDb" id="39947-Q7GDL5"/>
<dbReference type="EnsemblPlants" id="Os05t0129700-01">
    <property type="protein sequence ID" value="Os05t0129700-01"/>
    <property type="gene ID" value="Os05g0129700"/>
</dbReference>
<dbReference type="Gramene" id="Os05t0129700-01">
    <property type="protein sequence ID" value="Os05t0129700-01"/>
    <property type="gene ID" value="Os05g0129700"/>
</dbReference>
<dbReference type="KEGG" id="dosa:Os05g0129700"/>
<dbReference type="eggNOG" id="KOG0773">
    <property type="taxonomic scope" value="Eukaryota"/>
</dbReference>
<dbReference type="HOGENOM" id="CLU_040111_0_2_1"/>
<dbReference type="InParanoid" id="Q7GDL5"/>
<dbReference type="OMA" id="STHYRWP"/>
<dbReference type="OrthoDB" id="10056939at2759"/>
<dbReference type="PlantReactome" id="R-OSA-9826782">
    <property type="pathway name" value="Regulation of seed germination and coleoptile growth under submergence and normal gravity environment"/>
</dbReference>
<dbReference type="Proteomes" id="UP000000763">
    <property type="component" value="Chromosome 5"/>
</dbReference>
<dbReference type="Proteomes" id="UP000059680">
    <property type="component" value="Chromosome 5"/>
</dbReference>
<dbReference type="GO" id="GO:0005634">
    <property type="term" value="C:nucleus"/>
    <property type="evidence" value="ECO:0000318"/>
    <property type="project" value="GO_Central"/>
</dbReference>
<dbReference type="GO" id="GO:0003677">
    <property type="term" value="F:DNA binding"/>
    <property type="evidence" value="ECO:0007669"/>
    <property type="project" value="UniProtKB-KW"/>
</dbReference>
<dbReference type="GO" id="GO:0000981">
    <property type="term" value="F:DNA-binding transcription factor activity, RNA polymerase II-specific"/>
    <property type="evidence" value="ECO:0007669"/>
    <property type="project" value="InterPro"/>
</dbReference>
<dbReference type="CDD" id="cd00086">
    <property type="entry name" value="homeodomain"/>
    <property type="match status" value="1"/>
</dbReference>
<dbReference type="Gene3D" id="1.10.10.60">
    <property type="entry name" value="Homeodomain-like"/>
    <property type="match status" value="1"/>
</dbReference>
<dbReference type="InterPro" id="IPR005539">
    <property type="entry name" value="ELK_dom"/>
</dbReference>
<dbReference type="InterPro" id="IPR001356">
    <property type="entry name" value="HD"/>
</dbReference>
<dbReference type="InterPro" id="IPR017970">
    <property type="entry name" value="Homeobox_CS"/>
</dbReference>
<dbReference type="InterPro" id="IPR009057">
    <property type="entry name" value="Homeodomain-like_sf"/>
</dbReference>
<dbReference type="InterPro" id="IPR008422">
    <property type="entry name" value="KN_HD"/>
</dbReference>
<dbReference type="InterPro" id="IPR005540">
    <property type="entry name" value="KNOX1"/>
</dbReference>
<dbReference type="InterPro" id="IPR005541">
    <property type="entry name" value="KNOX2"/>
</dbReference>
<dbReference type="InterPro" id="IPR050224">
    <property type="entry name" value="TALE_homeobox"/>
</dbReference>
<dbReference type="PANTHER" id="PTHR11850">
    <property type="entry name" value="HOMEOBOX PROTEIN TRANSCRIPTION FACTORS"/>
    <property type="match status" value="1"/>
</dbReference>
<dbReference type="Pfam" id="PF03789">
    <property type="entry name" value="ELK"/>
    <property type="match status" value="1"/>
</dbReference>
<dbReference type="Pfam" id="PF05920">
    <property type="entry name" value="Homeobox_KN"/>
    <property type="match status" value="1"/>
</dbReference>
<dbReference type="Pfam" id="PF03790">
    <property type="entry name" value="KNOX1"/>
    <property type="match status" value="1"/>
</dbReference>
<dbReference type="Pfam" id="PF03791">
    <property type="entry name" value="KNOX2"/>
    <property type="match status" value="1"/>
</dbReference>
<dbReference type="SMART" id="SM01188">
    <property type="entry name" value="ELK"/>
    <property type="match status" value="1"/>
</dbReference>
<dbReference type="SMART" id="SM00389">
    <property type="entry name" value="HOX"/>
    <property type="match status" value="1"/>
</dbReference>
<dbReference type="SMART" id="SM01255">
    <property type="entry name" value="KNOX1"/>
    <property type="match status" value="1"/>
</dbReference>
<dbReference type="SMART" id="SM01256">
    <property type="entry name" value="KNOX2"/>
    <property type="match status" value="1"/>
</dbReference>
<dbReference type="SUPFAM" id="SSF46689">
    <property type="entry name" value="Homeodomain-like"/>
    <property type="match status" value="1"/>
</dbReference>
<dbReference type="PROSITE" id="PS51213">
    <property type="entry name" value="ELK"/>
    <property type="match status" value="1"/>
</dbReference>
<dbReference type="PROSITE" id="PS00027">
    <property type="entry name" value="HOMEOBOX_1"/>
    <property type="match status" value="1"/>
</dbReference>
<dbReference type="PROSITE" id="PS50071">
    <property type="entry name" value="HOMEOBOX_2"/>
    <property type="match status" value="1"/>
</dbReference>
<gene>
    <name type="primary">OSH71</name>
    <name type="synonym">HOS9</name>
    <name type="ordered locus">Os05g0129700</name>
    <name type="ordered locus">LOC_Os05g03884</name>
    <name type="ORF">OSJNBa0056I11.15</name>
</gene>
<comment type="function">
    <text evidence="4 6">Probable transcription factor that may be involved in shoot formation during embryogenesis.</text>
</comment>
<comment type="subcellular location">
    <subcellularLocation>
        <location evidence="1 2">Nucleus</location>
    </subcellularLocation>
</comment>
<comment type="developmental stage">
    <text evidence="4 5 6">Expressed in globular stage embryo 3 days after pollination (DAP) in a small region just below the center of the ventral portion of the embryo. At coleoptile stages, expressed in the corresponding region of the epiblast and the central part of the embryo, but weakly in the shoot apical meristem (SAM). At the shoot apex differentiation stage, expressed in the cells surrounding the provascular tissue and radicle primordia. In nearly mature embryos (6 DAP), expressed around the basal part of the provascular tissue and radicle, and around the shoot region at the base of the first leaf primordium, and the notch between the SAM and the second leaf primordium. Expressed uniformly in the inflorescence meristem, but after the transition from inflorescence to the floral phase, located specifically in the notches between the floral meristem and glume primordia. At later stages of flower development, uniformly expressed throughout the corpus of the meristem, and in the notches between glume primordia, but less well defined than in the previous stage.</text>
</comment>
<comment type="similarity">
    <text evidence="2">Belongs to the TALE/KNOX homeobox family.</text>
</comment>
<evidence type="ECO:0000255" key="1">
    <source>
        <dbReference type="PROSITE-ProRule" id="PRU00108"/>
    </source>
</evidence>
<evidence type="ECO:0000255" key="2">
    <source>
        <dbReference type="PROSITE-ProRule" id="PRU00559"/>
    </source>
</evidence>
<evidence type="ECO:0000256" key="3">
    <source>
        <dbReference type="SAM" id="MobiDB-lite"/>
    </source>
</evidence>
<evidence type="ECO:0000269" key="4">
    <source>
    </source>
</evidence>
<evidence type="ECO:0000269" key="5">
    <source>
    </source>
</evidence>
<evidence type="ECO:0000269" key="6">
    <source>
    </source>
</evidence>
<sequence length="311" mass="33348">MEDLYSIHPGISRGGGGGGGGAASEASGVAGGGSSPPHPPPPATTAAAADLTELMKAQIAGHPSYPSLLSAYIECRKVGAPPEVTTLLEEIGREGRGGGGGATAGGEIGLDPELDEFMETYCRVLERYKEELTRPFDEAASFLTGIHTQLASLCGGAPPPTDNSDEMVGSSEDEPCSGDADAADFGQEHSSRLADHELKEMLLKKYSGCLSRLRSEFLKKRKKGKLPKDARSALMDWWNTHYRWPYPTEEDKVRLAAMTGLDPKQINNWFINQRKRHWKPSEDMRFALMEGVTGGSSSGTTLYFDTGTIGP</sequence>